<gene>
    <name type="primary">fliD</name>
    <name type="ordered locus">Cj0548</name>
</gene>
<reference key="1">
    <citation type="journal article" date="2000" name="Nature">
        <title>The genome sequence of the food-borne pathogen Campylobacter jejuni reveals hypervariable sequences.</title>
        <authorList>
            <person name="Parkhill J."/>
            <person name="Wren B.W."/>
            <person name="Mungall K.L."/>
            <person name="Ketley J.M."/>
            <person name="Churcher C.M."/>
            <person name="Basham D."/>
            <person name="Chillingworth T."/>
            <person name="Davies R.M."/>
            <person name="Feltwell T."/>
            <person name="Holroyd S."/>
            <person name="Jagels K."/>
            <person name="Karlyshev A.V."/>
            <person name="Moule S."/>
            <person name="Pallen M.J."/>
            <person name="Penn C.W."/>
            <person name="Quail M.A."/>
            <person name="Rajandream M.A."/>
            <person name="Rutherford K.M."/>
            <person name="van Vliet A.H.M."/>
            <person name="Whitehead S."/>
            <person name="Barrell B.G."/>
        </authorList>
    </citation>
    <scope>NUCLEOTIDE SEQUENCE [LARGE SCALE GENOMIC DNA]</scope>
    <source>
        <strain>ATCC 700819 / NCTC 11168</strain>
    </source>
</reference>
<proteinExistence type="inferred from homology"/>
<protein>
    <recommendedName>
        <fullName>Flagellar hook-associated protein 2</fullName>
        <shortName>HAP2</shortName>
    </recommendedName>
    <alternativeName>
        <fullName>Filament cap protein</fullName>
    </alternativeName>
    <alternativeName>
        <fullName>Flagellar cap protein</fullName>
    </alternativeName>
</protein>
<comment type="function">
    <text evidence="1">Required for the morphogenesis and for the elongation of the flagellar filament by facilitating polymerization of the flagellin monomers at the tip of growing filament. Forms a capping structure, which prevents flagellin subunits (transported through the central channel of the flagellum) from leaking out without polymerization at the distal end (By similarity).</text>
</comment>
<comment type="subunit">
    <text evidence="1">Homopentamer.</text>
</comment>
<comment type="subcellular location">
    <subcellularLocation>
        <location>Secreted</location>
    </subcellularLocation>
    <subcellularLocation>
        <location>Bacterial flagellum</location>
    </subcellularLocation>
</comment>
<comment type="similarity">
    <text evidence="3">Belongs to the FliD family.</text>
</comment>
<keyword id="KW-0975">Bacterial flagellum</keyword>
<keyword id="KW-0175">Coiled coil</keyword>
<keyword id="KW-1185">Reference proteome</keyword>
<keyword id="KW-0964">Secreted</keyword>
<organism>
    <name type="scientific">Campylobacter jejuni subsp. jejuni serotype O:2 (strain ATCC 700819 / NCTC 11168)</name>
    <dbReference type="NCBI Taxonomy" id="192222"/>
    <lineage>
        <taxon>Bacteria</taxon>
        <taxon>Pseudomonadati</taxon>
        <taxon>Campylobacterota</taxon>
        <taxon>Epsilonproteobacteria</taxon>
        <taxon>Campylobacterales</taxon>
        <taxon>Campylobacteraceae</taxon>
        <taxon>Campylobacter</taxon>
    </lineage>
</organism>
<name>FLID_CAMJE</name>
<accession>Q9PHW6</accession>
<accession>Q0PAW8</accession>
<sequence>MAFGSLSSLGFGSGVLTQDTIDKLKEAEQKARIDPYTKKIEENTTKQKDLTEIKTKLLSFQTAVSSLADATVFAKRKVVGSISDNPPASLTVNSGVALQSMNINVTQLAQKDVYQSKGLANDGGFVNAQLNGTADLTFFSNGKEYTVTVDKNTTYRDLADKINEASGGEIVAKIVNTGEKGTPYRLTLTSKETGEDSAISFYAGKKDSNGKYQKDINAEKIFDDLGWGLDVSASIDPDKDKKGYGIKDASLHIQTAQNAEFTLDGIKMFRSSNTVTDLGVGMTLTLNKTGEINFDVQQDFEGVTKAMQDLVDAYNDLVTNLNAATDYNSETGTKGTLQGISEVNSIRSSILADLFDSQVVDGTTEDANGNKVNTKVMLSMQDFGLSLNDAGTLSFDSSKFEQKVKEDPDSTESFFSNITKYEDINHTGEVIKTGSLSKYLNSNGGNTNGLEFKPGDFTIVFNNQTYDLSKNSDGTNFKLTGKTEEELLQNLANHINSKGIEGLKVKVESYNQNNVTGFRLNFSGDGSSDFSIKGDANILKELGLSDVNITSKPIEGKGIFSKLKATLQEMTGKDGSITKYDESLTNDIKSLNTSKDSTQAMIDTRYDTMANQWLQYESILNKLNQQLNTVTNMINAANNSNN</sequence>
<dbReference type="EMBL" id="AL111168">
    <property type="protein sequence ID" value="CAL34694.1"/>
    <property type="molecule type" value="Genomic_DNA"/>
</dbReference>
<dbReference type="PIR" id="D81401">
    <property type="entry name" value="D81401"/>
</dbReference>
<dbReference type="RefSeq" id="WP_002864504.1">
    <property type="nucleotide sequence ID" value="NZ_SZUC01000002.1"/>
</dbReference>
<dbReference type="RefSeq" id="YP_002343979.1">
    <property type="nucleotide sequence ID" value="NC_002163.1"/>
</dbReference>
<dbReference type="SMR" id="Q9PHW6"/>
<dbReference type="IntAct" id="Q9PHW6">
    <property type="interactions" value="4"/>
</dbReference>
<dbReference type="STRING" id="192222.Cj0548"/>
<dbReference type="PaxDb" id="192222-Cj0548"/>
<dbReference type="EnsemblBacteria" id="CAL34694">
    <property type="protein sequence ID" value="CAL34694"/>
    <property type="gene ID" value="Cj0548"/>
</dbReference>
<dbReference type="GeneID" id="904875"/>
<dbReference type="KEGG" id="cje:Cj0548"/>
<dbReference type="PATRIC" id="fig|192222.6.peg.540"/>
<dbReference type="eggNOG" id="COG1345">
    <property type="taxonomic scope" value="Bacteria"/>
</dbReference>
<dbReference type="HOGENOM" id="CLU_015182_3_0_7"/>
<dbReference type="OrthoDB" id="1530at2"/>
<dbReference type="Proteomes" id="UP000000799">
    <property type="component" value="Chromosome"/>
</dbReference>
<dbReference type="GO" id="GO:0009421">
    <property type="term" value="C:bacterial-type flagellum filament cap"/>
    <property type="evidence" value="ECO:0007669"/>
    <property type="project" value="InterPro"/>
</dbReference>
<dbReference type="GO" id="GO:0009424">
    <property type="term" value="C:bacterial-type flagellum hook"/>
    <property type="evidence" value="ECO:0007669"/>
    <property type="project" value="InterPro"/>
</dbReference>
<dbReference type="GO" id="GO:0005576">
    <property type="term" value="C:extracellular region"/>
    <property type="evidence" value="ECO:0007669"/>
    <property type="project" value="UniProtKB-SubCell"/>
</dbReference>
<dbReference type="GO" id="GO:0071973">
    <property type="term" value="P:bacterial-type flagellum-dependent cell motility"/>
    <property type="evidence" value="ECO:0007669"/>
    <property type="project" value="TreeGrafter"/>
</dbReference>
<dbReference type="GO" id="GO:0007155">
    <property type="term" value="P:cell adhesion"/>
    <property type="evidence" value="ECO:0007669"/>
    <property type="project" value="InterPro"/>
</dbReference>
<dbReference type="InterPro" id="IPR010810">
    <property type="entry name" value="Flagellin_hook_IN_motif"/>
</dbReference>
<dbReference type="InterPro" id="IPR040026">
    <property type="entry name" value="FliD"/>
</dbReference>
<dbReference type="InterPro" id="IPR010809">
    <property type="entry name" value="FliD_C"/>
</dbReference>
<dbReference type="InterPro" id="IPR003481">
    <property type="entry name" value="FliD_N"/>
</dbReference>
<dbReference type="NCBIfam" id="NF009400">
    <property type="entry name" value="PRK12765.1"/>
    <property type="match status" value="1"/>
</dbReference>
<dbReference type="PANTHER" id="PTHR30288">
    <property type="entry name" value="FLAGELLAR CAP/ASSEMBLY PROTEIN FLID"/>
    <property type="match status" value="1"/>
</dbReference>
<dbReference type="PANTHER" id="PTHR30288:SF0">
    <property type="entry name" value="FLAGELLAR HOOK-ASSOCIATED PROTEIN 2"/>
    <property type="match status" value="1"/>
</dbReference>
<dbReference type="Pfam" id="PF07196">
    <property type="entry name" value="Flagellin_IN"/>
    <property type="match status" value="1"/>
</dbReference>
<dbReference type="Pfam" id="PF07195">
    <property type="entry name" value="FliD_C"/>
    <property type="match status" value="1"/>
</dbReference>
<dbReference type="Pfam" id="PF02465">
    <property type="entry name" value="FliD_N"/>
    <property type="match status" value="1"/>
</dbReference>
<feature type="chain" id="PRO_0000177016" description="Flagellar hook-associated protein 2">
    <location>
        <begin position="1"/>
        <end position="642"/>
    </location>
</feature>
<feature type="coiled-coil region" evidence="2">
    <location>
        <begin position="614"/>
        <end position="641"/>
    </location>
</feature>
<evidence type="ECO:0000250" key="1"/>
<evidence type="ECO:0000255" key="2"/>
<evidence type="ECO:0000305" key="3"/>